<gene>
    <name evidence="1" type="primary">lolA</name>
    <name type="ordered locus">Shal_2216</name>
</gene>
<feature type="signal peptide" evidence="1">
    <location>
        <begin position="1"/>
        <end position="22"/>
    </location>
</feature>
<feature type="chain" id="PRO_1000078361" description="Outer-membrane lipoprotein carrier protein">
    <location>
        <begin position="23"/>
        <end position="208"/>
    </location>
</feature>
<accession>B0TUP7</accession>
<organism>
    <name type="scientific">Shewanella halifaxensis (strain HAW-EB4)</name>
    <dbReference type="NCBI Taxonomy" id="458817"/>
    <lineage>
        <taxon>Bacteria</taxon>
        <taxon>Pseudomonadati</taxon>
        <taxon>Pseudomonadota</taxon>
        <taxon>Gammaproteobacteria</taxon>
        <taxon>Alteromonadales</taxon>
        <taxon>Shewanellaceae</taxon>
        <taxon>Shewanella</taxon>
    </lineage>
</organism>
<dbReference type="EMBL" id="CP000931">
    <property type="protein sequence ID" value="ABZ76775.1"/>
    <property type="molecule type" value="Genomic_DNA"/>
</dbReference>
<dbReference type="RefSeq" id="WP_012277305.1">
    <property type="nucleotide sequence ID" value="NC_010334.1"/>
</dbReference>
<dbReference type="SMR" id="B0TUP7"/>
<dbReference type="STRING" id="458817.Shal_2216"/>
<dbReference type="KEGG" id="shl:Shal_2216"/>
<dbReference type="eggNOG" id="COG2834">
    <property type="taxonomic scope" value="Bacteria"/>
</dbReference>
<dbReference type="HOGENOM" id="CLU_087560_1_1_6"/>
<dbReference type="OrthoDB" id="9787361at2"/>
<dbReference type="Proteomes" id="UP000001317">
    <property type="component" value="Chromosome"/>
</dbReference>
<dbReference type="GO" id="GO:0030288">
    <property type="term" value="C:outer membrane-bounded periplasmic space"/>
    <property type="evidence" value="ECO:0007669"/>
    <property type="project" value="TreeGrafter"/>
</dbReference>
<dbReference type="GO" id="GO:0044874">
    <property type="term" value="P:lipoprotein localization to outer membrane"/>
    <property type="evidence" value="ECO:0007669"/>
    <property type="project" value="UniProtKB-UniRule"/>
</dbReference>
<dbReference type="GO" id="GO:0042953">
    <property type="term" value="P:lipoprotein transport"/>
    <property type="evidence" value="ECO:0007669"/>
    <property type="project" value="InterPro"/>
</dbReference>
<dbReference type="CDD" id="cd16325">
    <property type="entry name" value="LolA"/>
    <property type="match status" value="1"/>
</dbReference>
<dbReference type="Gene3D" id="2.50.20.10">
    <property type="entry name" value="Lipoprotein localisation LolA/LolB/LppX"/>
    <property type="match status" value="1"/>
</dbReference>
<dbReference type="HAMAP" id="MF_00240">
    <property type="entry name" value="LolA"/>
    <property type="match status" value="1"/>
</dbReference>
<dbReference type="InterPro" id="IPR029046">
    <property type="entry name" value="LolA/LolB/LppX"/>
</dbReference>
<dbReference type="InterPro" id="IPR004564">
    <property type="entry name" value="OM_lipoprot_carrier_LolA-like"/>
</dbReference>
<dbReference type="InterPro" id="IPR018323">
    <property type="entry name" value="OM_lipoprot_carrier_LolA_Pbac"/>
</dbReference>
<dbReference type="NCBIfam" id="TIGR00547">
    <property type="entry name" value="lolA"/>
    <property type="match status" value="1"/>
</dbReference>
<dbReference type="PANTHER" id="PTHR35869">
    <property type="entry name" value="OUTER-MEMBRANE LIPOPROTEIN CARRIER PROTEIN"/>
    <property type="match status" value="1"/>
</dbReference>
<dbReference type="PANTHER" id="PTHR35869:SF1">
    <property type="entry name" value="OUTER-MEMBRANE LIPOPROTEIN CARRIER PROTEIN"/>
    <property type="match status" value="1"/>
</dbReference>
<dbReference type="Pfam" id="PF03548">
    <property type="entry name" value="LolA"/>
    <property type="match status" value="1"/>
</dbReference>
<dbReference type="SUPFAM" id="SSF89392">
    <property type="entry name" value="Prokaryotic lipoproteins and lipoprotein localization factors"/>
    <property type="match status" value="1"/>
</dbReference>
<proteinExistence type="inferred from homology"/>
<comment type="function">
    <text evidence="1">Participates in the translocation of lipoproteins from the inner membrane to the outer membrane. Only forms a complex with a lipoprotein if the residue after the N-terminal Cys is not an aspartate (The Asp acts as a targeting signal to indicate that the lipoprotein should stay in the inner membrane).</text>
</comment>
<comment type="subunit">
    <text evidence="1">Monomer.</text>
</comment>
<comment type="subcellular location">
    <subcellularLocation>
        <location evidence="1">Periplasm</location>
    </subcellularLocation>
</comment>
<comment type="similarity">
    <text evidence="1">Belongs to the LolA family.</text>
</comment>
<name>LOLA_SHEHH</name>
<reference key="1">
    <citation type="submission" date="2008-01" db="EMBL/GenBank/DDBJ databases">
        <title>Complete sequence of Shewanella halifaxensis HAW-EB4.</title>
        <authorList>
            <consortium name="US DOE Joint Genome Institute"/>
            <person name="Copeland A."/>
            <person name="Lucas S."/>
            <person name="Lapidus A."/>
            <person name="Glavina del Rio T."/>
            <person name="Dalin E."/>
            <person name="Tice H."/>
            <person name="Bruce D."/>
            <person name="Goodwin L."/>
            <person name="Pitluck S."/>
            <person name="Sims D."/>
            <person name="Brettin T."/>
            <person name="Detter J.C."/>
            <person name="Han C."/>
            <person name="Kuske C.R."/>
            <person name="Schmutz J."/>
            <person name="Larimer F."/>
            <person name="Land M."/>
            <person name="Hauser L."/>
            <person name="Kyrpides N."/>
            <person name="Kim E."/>
            <person name="Zhao J.-S."/>
            <person name="Richardson P."/>
        </authorList>
    </citation>
    <scope>NUCLEOTIDE SEQUENCE [LARGE SCALE GENOMIC DNA]</scope>
    <source>
        <strain>HAW-EB4</strain>
    </source>
</reference>
<protein>
    <recommendedName>
        <fullName evidence="1">Outer-membrane lipoprotein carrier protein</fullName>
    </recommendedName>
</protein>
<evidence type="ECO:0000255" key="1">
    <source>
        <dbReference type="HAMAP-Rule" id="MF_00240"/>
    </source>
</evidence>
<sequence length="208" mass="23095">MKKIFAIAALSLPLFSHFPAFAGASDELKVKLTEISSLKANFNQTVTDINDKVIQTGEGVFALSHPNQFYWHLTAPDESLIVADGTDVWIYNPFAEEVSVMDLNQAINASPIALLVHSDDETWSQYNVSQKENCFDISPKDKDSGGSEVQVCFNDNQLTKMVLKDQQGNISDFTLTNQSVIAGKDQDLFKFVVPDDVDIDDQRLKSTN</sequence>
<keyword id="KW-0143">Chaperone</keyword>
<keyword id="KW-0574">Periplasm</keyword>
<keyword id="KW-0653">Protein transport</keyword>
<keyword id="KW-0732">Signal</keyword>
<keyword id="KW-0813">Transport</keyword>